<accession>Q9HDV1</accession>
<proteinExistence type="evidence at protein level"/>
<name>MU180_SCHPO</name>
<reference key="1">
    <citation type="journal article" date="2002" name="Nature">
        <title>The genome sequence of Schizosaccharomyces pombe.</title>
        <authorList>
            <person name="Wood V."/>
            <person name="Gwilliam R."/>
            <person name="Rajandream M.A."/>
            <person name="Lyne M.H."/>
            <person name="Lyne R."/>
            <person name="Stewart A."/>
            <person name="Sgouros J.G."/>
            <person name="Peat N."/>
            <person name="Hayles J."/>
            <person name="Baker S.G."/>
            <person name="Basham D."/>
            <person name="Bowman S."/>
            <person name="Brooks K."/>
            <person name="Brown D."/>
            <person name="Brown S."/>
            <person name="Chillingworth T."/>
            <person name="Churcher C.M."/>
            <person name="Collins M."/>
            <person name="Connor R."/>
            <person name="Cronin A."/>
            <person name="Davis P."/>
            <person name="Feltwell T."/>
            <person name="Fraser A."/>
            <person name="Gentles S."/>
            <person name="Goble A."/>
            <person name="Hamlin N."/>
            <person name="Harris D.E."/>
            <person name="Hidalgo J."/>
            <person name="Hodgson G."/>
            <person name="Holroyd S."/>
            <person name="Hornsby T."/>
            <person name="Howarth S."/>
            <person name="Huckle E.J."/>
            <person name="Hunt S."/>
            <person name="Jagels K."/>
            <person name="James K.D."/>
            <person name="Jones L."/>
            <person name="Jones M."/>
            <person name="Leather S."/>
            <person name="McDonald S."/>
            <person name="McLean J."/>
            <person name="Mooney P."/>
            <person name="Moule S."/>
            <person name="Mungall K.L."/>
            <person name="Murphy L.D."/>
            <person name="Niblett D."/>
            <person name="Odell C."/>
            <person name="Oliver K."/>
            <person name="O'Neil S."/>
            <person name="Pearson D."/>
            <person name="Quail M.A."/>
            <person name="Rabbinowitsch E."/>
            <person name="Rutherford K.M."/>
            <person name="Rutter S."/>
            <person name="Saunders D."/>
            <person name="Seeger K."/>
            <person name="Sharp S."/>
            <person name="Skelton J."/>
            <person name="Simmonds M.N."/>
            <person name="Squares R."/>
            <person name="Squares S."/>
            <person name="Stevens K."/>
            <person name="Taylor K."/>
            <person name="Taylor R.G."/>
            <person name="Tivey A."/>
            <person name="Walsh S.V."/>
            <person name="Warren T."/>
            <person name="Whitehead S."/>
            <person name="Woodward J.R."/>
            <person name="Volckaert G."/>
            <person name="Aert R."/>
            <person name="Robben J."/>
            <person name="Grymonprez B."/>
            <person name="Weltjens I."/>
            <person name="Vanstreels E."/>
            <person name="Rieger M."/>
            <person name="Schaefer M."/>
            <person name="Mueller-Auer S."/>
            <person name="Gabel C."/>
            <person name="Fuchs M."/>
            <person name="Duesterhoeft A."/>
            <person name="Fritzc C."/>
            <person name="Holzer E."/>
            <person name="Moestl D."/>
            <person name="Hilbert H."/>
            <person name="Borzym K."/>
            <person name="Langer I."/>
            <person name="Beck A."/>
            <person name="Lehrach H."/>
            <person name="Reinhardt R."/>
            <person name="Pohl T.M."/>
            <person name="Eger P."/>
            <person name="Zimmermann W."/>
            <person name="Wedler H."/>
            <person name="Wambutt R."/>
            <person name="Purnelle B."/>
            <person name="Goffeau A."/>
            <person name="Cadieu E."/>
            <person name="Dreano S."/>
            <person name="Gloux S."/>
            <person name="Lelaure V."/>
            <person name="Mottier S."/>
            <person name="Galibert F."/>
            <person name="Aves S.J."/>
            <person name="Xiang Z."/>
            <person name="Hunt C."/>
            <person name="Moore K."/>
            <person name="Hurst S.M."/>
            <person name="Lucas M."/>
            <person name="Rochet M."/>
            <person name="Gaillardin C."/>
            <person name="Tallada V.A."/>
            <person name="Garzon A."/>
            <person name="Thode G."/>
            <person name="Daga R.R."/>
            <person name="Cruzado L."/>
            <person name="Jimenez J."/>
            <person name="Sanchez M."/>
            <person name="del Rey F."/>
            <person name="Benito J."/>
            <person name="Dominguez A."/>
            <person name="Revuelta J.L."/>
            <person name="Moreno S."/>
            <person name="Armstrong J."/>
            <person name="Forsburg S.L."/>
            <person name="Cerutti L."/>
            <person name="Lowe T."/>
            <person name="McCombie W.R."/>
            <person name="Paulsen I."/>
            <person name="Potashkin J."/>
            <person name="Shpakovski G.V."/>
            <person name="Ussery D."/>
            <person name="Barrell B.G."/>
            <person name="Nurse P."/>
        </authorList>
    </citation>
    <scope>NUCLEOTIDE SEQUENCE [LARGE SCALE GENOMIC DNA]</scope>
    <source>
        <strain>972 / ATCC 24843</strain>
    </source>
</reference>
<reference key="2">
    <citation type="journal article" date="2005" name="Curr. Biol.">
        <title>A large-scale screen in S. pombe identifies seven novel genes required for critical meiotic events.</title>
        <authorList>
            <person name="Martin-Castellanos C."/>
            <person name="Blanco M."/>
            <person name="Rozalen A.E."/>
            <person name="Perez-Hidalgo L."/>
            <person name="Garcia A.I."/>
            <person name="Conde F."/>
            <person name="Mata J."/>
            <person name="Ellermeier C."/>
            <person name="Davis L."/>
            <person name="San-Segundo P."/>
            <person name="Smith G.R."/>
            <person name="Moreno S."/>
        </authorList>
    </citation>
    <scope>FUNCTION IN MEIOSIS</scope>
</reference>
<reference key="3">
    <citation type="journal article" date="2006" name="Nat. Biotechnol.">
        <title>ORFeome cloning and global analysis of protein localization in the fission yeast Schizosaccharomyces pombe.</title>
        <authorList>
            <person name="Matsuyama A."/>
            <person name="Arai R."/>
            <person name="Yashiroda Y."/>
            <person name="Shirai A."/>
            <person name="Kamata A."/>
            <person name="Sekido S."/>
            <person name="Kobayashi Y."/>
            <person name="Hashimoto A."/>
            <person name="Hamamoto M."/>
            <person name="Hiraoka Y."/>
            <person name="Horinouchi S."/>
            <person name="Yoshida M."/>
        </authorList>
    </citation>
    <scope>SUBCELLULAR LOCATION [LARGE SCALE ANALYSIS]</scope>
</reference>
<comment type="function">
    <text evidence="1 4">Required for the deacetylation of acetylated sterols (By similarity). Has a role in meiosis.</text>
</comment>
<comment type="subcellular location">
    <subcellularLocation>
        <location evidence="5">Cytoplasm</location>
    </subcellularLocation>
    <subcellularLocation>
        <location evidence="5">Endoplasmic reticulum membrane</location>
        <topology evidence="5">Single-pass type II membrane protein</topology>
    </subcellularLocation>
</comment>
<comment type="similarity">
    <text evidence="6">Belongs to the 'GDXG' lipolytic enzyme family.</text>
</comment>
<organism>
    <name type="scientific">Schizosaccharomyces pombe (strain 972 / ATCC 24843)</name>
    <name type="common">Fission yeast</name>
    <dbReference type="NCBI Taxonomy" id="284812"/>
    <lineage>
        <taxon>Eukaryota</taxon>
        <taxon>Fungi</taxon>
        <taxon>Dikarya</taxon>
        <taxon>Ascomycota</taxon>
        <taxon>Taphrinomycotina</taxon>
        <taxon>Schizosaccharomycetes</taxon>
        <taxon>Schizosaccharomycetales</taxon>
        <taxon>Schizosaccharomycetaceae</taxon>
        <taxon>Schizosaccharomyces</taxon>
    </lineage>
</organism>
<sequence>MISLSLLYRILTLPIILVGTTILYFTIGTNFPHDELRHNLLSTLFCSSMLHLSKGLTVKDVRIFFHDSIGSTLLKNRKKLNSENELPNYGEKFTHKYDNQDMPDSVWLAKVNGMTKSDPIILHLHGGMMALPYDKVILVGLSNLYKLFSTTMNRPPSILLVDYSLVSQGYTYPKQVRECLNVYQVLISKGFRNITVLGESAGGTLILSFLYQISELSKLNKVVWPKGVALISPWLDLTNAKKIGSYRANDGLDVICYETLNRFGKAYVNNEESLFTSSVVNINMNCDISIWSKIPPIQDGKVLVLFGENEVFRDEILSWTSKIGLLKAYPNRVLMDKQGIHIGLFLEESPSIGPGMTNLDIWKKKFSVNSLYTFLRETFEE</sequence>
<keyword id="KW-0963">Cytoplasm</keyword>
<keyword id="KW-0256">Endoplasmic reticulum</keyword>
<keyword id="KW-0325">Glycoprotein</keyword>
<keyword id="KW-0378">Hydrolase</keyword>
<keyword id="KW-0469">Meiosis</keyword>
<keyword id="KW-0472">Membrane</keyword>
<keyword id="KW-1185">Reference proteome</keyword>
<keyword id="KW-0735">Signal-anchor</keyword>
<keyword id="KW-0812">Transmembrane</keyword>
<keyword id="KW-1133">Transmembrane helix</keyword>
<evidence type="ECO:0000250" key="1"/>
<evidence type="ECO:0000250" key="2">
    <source>
        <dbReference type="UniProtKB" id="Q5NUF3"/>
    </source>
</evidence>
<evidence type="ECO:0000255" key="3"/>
<evidence type="ECO:0000269" key="4">
    <source>
    </source>
</evidence>
<evidence type="ECO:0000269" key="5">
    <source>
    </source>
</evidence>
<evidence type="ECO:0000305" key="6"/>
<gene>
    <name type="primary">mug180</name>
    <name type="ORF">SPBPB2B2.02</name>
</gene>
<protein>
    <recommendedName>
        <fullName>Putative steryl acetyl hydrolase mug81</fullName>
        <ecNumber>3.1.1.-</ecNumber>
    </recommendedName>
    <alternativeName>
        <fullName>Meiotically up-regulated gene 180 protein</fullName>
    </alternativeName>
</protein>
<dbReference type="EC" id="3.1.1.-"/>
<dbReference type="EMBL" id="CU329671">
    <property type="protein sequence ID" value="CAC21404.1"/>
    <property type="molecule type" value="Genomic_DNA"/>
</dbReference>
<dbReference type="RefSeq" id="NP_596850.1">
    <property type="nucleotide sequence ID" value="NM_001023873.2"/>
</dbReference>
<dbReference type="SMR" id="Q9HDV1"/>
<dbReference type="BioGRID" id="277903">
    <property type="interactions" value="1"/>
</dbReference>
<dbReference type="FunCoup" id="Q9HDV1">
    <property type="interactions" value="27"/>
</dbReference>
<dbReference type="STRING" id="284812.Q9HDV1"/>
<dbReference type="ESTHER" id="schpo-SPBPB2B2.02">
    <property type="family name" value="Steryl_acetyl_hydrolase"/>
</dbReference>
<dbReference type="GlyCosmos" id="Q9HDV1">
    <property type="glycosylation" value="1 site, No reported glycans"/>
</dbReference>
<dbReference type="iPTMnet" id="Q9HDV1"/>
<dbReference type="PaxDb" id="4896-SPBPB2B2.02.1"/>
<dbReference type="EnsemblFungi" id="SPBPB2B2.02.1">
    <property type="protein sequence ID" value="SPBPB2B2.02.1:pep"/>
    <property type="gene ID" value="SPBPB2B2.02"/>
</dbReference>
<dbReference type="GeneID" id="2541394"/>
<dbReference type="KEGG" id="spo:2541394"/>
<dbReference type="PomBase" id="SPBPB2B2.02">
    <property type="gene designation" value="mug180"/>
</dbReference>
<dbReference type="VEuPathDB" id="FungiDB:SPBPB2B2.02"/>
<dbReference type="eggNOG" id="ENOG502RDZA">
    <property type="taxonomic scope" value="Eukaryota"/>
</dbReference>
<dbReference type="HOGENOM" id="CLU_717977_0_0_1"/>
<dbReference type="InParanoid" id="Q9HDV1"/>
<dbReference type="OMA" id="YNYSAND"/>
<dbReference type="PhylomeDB" id="Q9HDV1"/>
<dbReference type="PRO" id="PR:Q9HDV1"/>
<dbReference type="Proteomes" id="UP000002485">
    <property type="component" value="Chromosome II"/>
</dbReference>
<dbReference type="GO" id="GO:0005737">
    <property type="term" value="C:cytoplasm"/>
    <property type="evidence" value="ECO:0007005"/>
    <property type="project" value="PomBase"/>
</dbReference>
<dbReference type="GO" id="GO:0005783">
    <property type="term" value="C:endoplasmic reticulum"/>
    <property type="evidence" value="ECO:0007005"/>
    <property type="project" value="PomBase"/>
</dbReference>
<dbReference type="GO" id="GO:0005789">
    <property type="term" value="C:endoplasmic reticulum membrane"/>
    <property type="evidence" value="ECO:0007669"/>
    <property type="project" value="UniProtKB-SubCell"/>
</dbReference>
<dbReference type="GO" id="GO:0034084">
    <property type="term" value="F:steryl deacetylase activity"/>
    <property type="evidence" value="ECO:0000266"/>
    <property type="project" value="PomBase"/>
</dbReference>
<dbReference type="GO" id="GO:0051321">
    <property type="term" value="P:meiotic cell cycle"/>
    <property type="evidence" value="ECO:0007669"/>
    <property type="project" value="UniProtKB-KW"/>
</dbReference>
<dbReference type="GO" id="GO:0016125">
    <property type="term" value="P:sterol metabolic process"/>
    <property type="evidence" value="ECO:0000266"/>
    <property type="project" value="PomBase"/>
</dbReference>
<dbReference type="Gene3D" id="3.40.50.1820">
    <property type="entry name" value="alpha/beta hydrolase"/>
    <property type="match status" value="1"/>
</dbReference>
<dbReference type="InterPro" id="IPR029058">
    <property type="entry name" value="AB_hydrolase_fold"/>
</dbReference>
<dbReference type="InterPro" id="IPR050300">
    <property type="entry name" value="GDXG_lipolytic_enzyme"/>
</dbReference>
<dbReference type="InterPro" id="IPR019436">
    <property type="entry name" value="Say1-like"/>
</dbReference>
<dbReference type="PANTHER" id="PTHR48081">
    <property type="entry name" value="AB HYDROLASE SUPERFAMILY PROTEIN C4A8.06C"/>
    <property type="match status" value="1"/>
</dbReference>
<dbReference type="PANTHER" id="PTHR48081:SF31">
    <property type="entry name" value="STERYL ACETYL HYDROLASE MUG81-RELATED"/>
    <property type="match status" value="1"/>
</dbReference>
<dbReference type="Pfam" id="PF10340">
    <property type="entry name" value="Say1_Mug180"/>
    <property type="match status" value="1"/>
</dbReference>
<dbReference type="SUPFAM" id="SSF53474">
    <property type="entry name" value="alpha/beta-Hydrolases"/>
    <property type="match status" value="1"/>
</dbReference>
<dbReference type="PROSITE" id="PS00436">
    <property type="entry name" value="PEROXIDASE_2"/>
    <property type="match status" value="1"/>
</dbReference>
<feature type="chain" id="PRO_0000278630" description="Putative steryl acetyl hydrolase mug81">
    <location>
        <begin position="1"/>
        <end position="381"/>
    </location>
</feature>
<feature type="topological domain" description="Cytoplasmic" evidence="3">
    <location>
        <begin position="1"/>
        <end position="9"/>
    </location>
</feature>
<feature type="transmembrane region" description="Helical; Signal-anchor for type II membrane protein" evidence="3">
    <location>
        <begin position="10"/>
        <end position="30"/>
    </location>
</feature>
<feature type="topological domain" description="Lumenal" evidence="3">
    <location>
        <begin position="31"/>
        <end position="381"/>
    </location>
</feature>
<feature type="short sequence motif" description="Involved in the stabilization of the negatively charged intermediate by the formation of the oxyanion hole" evidence="2">
    <location>
        <begin position="125"/>
        <end position="127"/>
    </location>
</feature>
<feature type="active site" evidence="2">
    <location>
        <position position="200"/>
    </location>
</feature>
<feature type="glycosylation site" description="N-linked (GlcNAc...) asparagine" evidence="3">
    <location>
        <position position="193"/>
    </location>
</feature>